<gene>
    <name evidence="1" type="primary">pdxY</name>
    <name type="ordered locus">YPA_1714</name>
</gene>
<protein>
    <recommendedName>
        <fullName evidence="1">Pyridoxal kinase PdxY</fullName>
        <shortName evidence="1">PL kinase</shortName>
        <ecNumber evidence="1">2.7.1.35</ecNumber>
    </recommendedName>
</protein>
<proteinExistence type="inferred from homology"/>
<evidence type="ECO:0000255" key="1">
    <source>
        <dbReference type="HAMAP-Rule" id="MF_01639"/>
    </source>
</evidence>
<sequence length="286" mass="31185">MKNILSIQSHVVFGHAGNSAAEFPMRRMGVNVWPLNTVQFSNHTQYGHWTGCVMPASHLTDIVQGIADIDRLKDCDAVLSGYIGSPEQGSHILAAVAQVKQANPDAWYFCDPVMGHPEKGCIVAPGVAEFFCNEALPASDMIAPNLLELEQLSGERVENVEQAVQVARSLCARGPKVVLVKHLSRAGYHADCFEMLLVTADDAWHICRPLVDFGKRQPVGVGDLTSGLLLVNLLKGEPLDKALEHVTAAVYEVMLKTQEMGEYELQVVAAQETIVTPICQFTAVRL</sequence>
<reference key="1">
    <citation type="journal article" date="2006" name="J. Bacteriol.">
        <title>Complete genome sequence of Yersinia pestis strains Antiqua and Nepal516: evidence of gene reduction in an emerging pathogen.</title>
        <authorList>
            <person name="Chain P.S.G."/>
            <person name="Hu P."/>
            <person name="Malfatti S.A."/>
            <person name="Radnedge L."/>
            <person name="Larimer F."/>
            <person name="Vergez L.M."/>
            <person name="Worsham P."/>
            <person name="Chu M.C."/>
            <person name="Andersen G.L."/>
        </authorList>
    </citation>
    <scope>NUCLEOTIDE SEQUENCE [LARGE SCALE GENOMIC DNA]</scope>
    <source>
        <strain>Antiqua</strain>
    </source>
</reference>
<feature type="chain" id="PRO_0000269839" description="Pyridoxal kinase PdxY">
    <location>
        <begin position="1"/>
        <end position="286"/>
    </location>
</feature>
<feature type="binding site" evidence="1">
    <location>
        <position position="9"/>
    </location>
    <ligand>
        <name>substrate</name>
    </ligand>
</feature>
<feature type="binding site" evidence="1">
    <location>
        <begin position="44"/>
        <end position="45"/>
    </location>
    <ligand>
        <name>substrate</name>
    </ligand>
</feature>
<feature type="binding site" evidence="1">
    <location>
        <position position="111"/>
    </location>
    <ligand>
        <name>ATP</name>
        <dbReference type="ChEBI" id="CHEBI:30616"/>
    </ligand>
</feature>
<feature type="binding site" evidence="1">
    <location>
        <position position="143"/>
    </location>
    <ligand>
        <name>ATP</name>
        <dbReference type="ChEBI" id="CHEBI:30616"/>
    </ligand>
</feature>
<feature type="binding site" evidence="1">
    <location>
        <position position="148"/>
    </location>
    <ligand>
        <name>ATP</name>
        <dbReference type="ChEBI" id="CHEBI:30616"/>
    </ligand>
</feature>
<feature type="binding site" evidence="1">
    <location>
        <position position="181"/>
    </location>
    <ligand>
        <name>ATP</name>
        <dbReference type="ChEBI" id="CHEBI:30616"/>
    </ligand>
</feature>
<feature type="binding site" evidence="1">
    <location>
        <begin position="208"/>
        <end position="211"/>
    </location>
    <ligand>
        <name>ATP</name>
        <dbReference type="ChEBI" id="CHEBI:30616"/>
    </ligand>
</feature>
<feature type="binding site" evidence="1">
    <location>
        <position position="223"/>
    </location>
    <ligand>
        <name>substrate</name>
    </ligand>
</feature>
<accession>Q1C792</accession>
<name>PDXY_YERPA</name>
<dbReference type="EC" id="2.7.1.35" evidence="1"/>
<dbReference type="EMBL" id="CP000308">
    <property type="protein sequence ID" value="ABG13680.1"/>
    <property type="molecule type" value="Genomic_DNA"/>
</dbReference>
<dbReference type="RefSeq" id="WP_002210961.1">
    <property type="nucleotide sequence ID" value="NZ_CP009906.1"/>
</dbReference>
<dbReference type="SMR" id="Q1C792"/>
<dbReference type="GeneID" id="57976307"/>
<dbReference type="KEGG" id="ypa:YPA_1714"/>
<dbReference type="UniPathway" id="UPA01068">
    <property type="reaction ID" value="UER00298"/>
</dbReference>
<dbReference type="Proteomes" id="UP000001971">
    <property type="component" value="Chromosome"/>
</dbReference>
<dbReference type="GO" id="GO:0005829">
    <property type="term" value="C:cytosol"/>
    <property type="evidence" value="ECO:0007669"/>
    <property type="project" value="TreeGrafter"/>
</dbReference>
<dbReference type="GO" id="GO:0005524">
    <property type="term" value="F:ATP binding"/>
    <property type="evidence" value="ECO:0007669"/>
    <property type="project" value="UniProtKB-UniRule"/>
</dbReference>
<dbReference type="GO" id="GO:0000287">
    <property type="term" value="F:magnesium ion binding"/>
    <property type="evidence" value="ECO:0007669"/>
    <property type="project" value="UniProtKB-UniRule"/>
</dbReference>
<dbReference type="GO" id="GO:0008478">
    <property type="term" value="F:pyridoxal kinase activity"/>
    <property type="evidence" value="ECO:0007669"/>
    <property type="project" value="UniProtKB-UniRule"/>
</dbReference>
<dbReference type="GO" id="GO:0009443">
    <property type="term" value="P:pyridoxal 5'-phosphate salvage"/>
    <property type="evidence" value="ECO:0007669"/>
    <property type="project" value="UniProtKB-UniRule"/>
</dbReference>
<dbReference type="CDD" id="cd01173">
    <property type="entry name" value="pyridoxal_pyridoxamine_kinase"/>
    <property type="match status" value="1"/>
</dbReference>
<dbReference type="FunFam" id="3.40.1190.20:FF:000008">
    <property type="entry name" value="Pyridoxal kinase PdxY"/>
    <property type="match status" value="1"/>
</dbReference>
<dbReference type="Gene3D" id="3.40.1190.20">
    <property type="match status" value="1"/>
</dbReference>
<dbReference type="HAMAP" id="MF_01639">
    <property type="entry name" value="PdxY"/>
    <property type="match status" value="1"/>
</dbReference>
<dbReference type="InterPro" id="IPR013749">
    <property type="entry name" value="PM/HMP-P_kinase-1"/>
</dbReference>
<dbReference type="InterPro" id="IPR004625">
    <property type="entry name" value="PyrdxlKinase"/>
</dbReference>
<dbReference type="InterPro" id="IPR023685">
    <property type="entry name" value="Pyridoxal_kinase_PdxY"/>
</dbReference>
<dbReference type="InterPro" id="IPR029056">
    <property type="entry name" value="Ribokinase-like"/>
</dbReference>
<dbReference type="NCBIfam" id="NF004398">
    <property type="entry name" value="PRK05756.1"/>
    <property type="match status" value="1"/>
</dbReference>
<dbReference type="NCBIfam" id="TIGR00687">
    <property type="entry name" value="pyridox_kin"/>
    <property type="match status" value="1"/>
</dbReference>
<dbReference type="PANTHER" id="PTHR10534">
    <property type="entry name" value="PYRIDOXAL KINASE"/>
    <property type="match status" value="1"/>
</dbReference>
<dbReference type="PANTHER" id="PTHR10534:SF2">
    <property type="entry name" value="PYRIDOXAL KINASE"/>
    <property type="match status" value="1"/>
</dbReference>
<dbReference type="Pfam" id="PF08543">
    <property type="entry name" value="Phos_pyr_kin"/>
    <property type="match status" value="1"/>
</dbReference>
<dbReference type="SUPFAM" id="SSF53613">
    <property type="entry name" value="Ribokinase-like"/>
    <property type="match status" value="1"/>
</dbReference>
<keyword id="KW-0067">ATP-binding</keyword>
<keyword id="KW-0418">Kinase</keyword>
<keyword id="KW-0460">Magnesium</keyword>
<keyword id="KW-0547">Nucleotide-binding</keyword>
<keyword id="KW-0808">Transferase</keyword>
<organism>
    <name type="scientific">Yersinia pestis bv. Antiqua (strain Antiqua)</name>
    <dbReference type="NCBI Taxonomy" id="360102"/>
    <lineage>
        <taxon>Bacteria</taxon>
        <taxon>Pseudomonadati</taxon>
        <taxon>Pseudomonadota</taxon>
        <taxon>Gammaproteobacteria</taxon>
        <taxon>Enterobacterales</taxon>
        <taxon>Yersiniaceae</taxon>
        <taxon>Yersinia</taxon>
    </lineage>
</organism>
<comment type="function">
    <text evidence="1">Pyridoxal kinase involved in the salvage pathway of pyridoxal 5'-phosphate (PLP). Catalyzes the phosphorylation of pyridoxal to PLP.</text>
</comment>
<comment type="catalytic activity">
    <reaction evidence="1">
        <text>pyridoxal + ATP = pyridoxal 5'-phosphate + ADP + H(+)</text>
        <dbReference type="Rhea" id="RHEA:10224"/>
        <dbReference type="ChEBI" id="CHEBI:15378"/>
        <dbReference type="ChEBI" id="CHEBI:17310"/>
        <dbReference type="ChEBI" id="CHEBI:30616"/>
        <dbReference type="ChEBI" id="CHEBI:456216"/>
        <dbReference type="ChEBI" id="CHEBI:597326"/>
        <dbReference type="EC" id="2.7.1.35"/>
    </reaction>
</comment>
<comment type="cofactor">
    <cofactor evidence="1">
        <name>Mg(2+)</name>
        <dbReference type="ChEBI" id="CHEBI:18420"/>
    </cofactor>
</comment>
<comment type="pathway">
    <text evidence="1">Cofactor metabolism; pyridoxal 5'-phosphate salvage; pyridoxal 5'-phosphate from pyridoxal: step 1/1.</text>
</comment>
<comment type="subunit">
    <text evidence="1">Homodimer.</text>
</comment>
<comment type="similarity">
    <text evidence="1">Belongs to the pyridoxine kinase family. PdxY subfamily.</text>
</comment>